<feature type="propeptide" id="PRO_0000333614" evidence="2">
    <location>
        <begin position="1"/>
        <end status="unknown"/>
    </location>
</feature>
<feature type="chain" id="PRO_0000333615" description="Metacaspase-1B">
    <location>
        <begin status="unknown"/>
        <end position="410"/>
    </location>
</feature>
<feature type="region of interest" description="Disordered" evidence="3">
    <location>
        <begin position="1"/>
        <end position="106"/>
    </location>
</feature>
<feature type="compositionally biased region" description="Pro residues" evidence="3">
    <location>
        <begin position="7"/>
        <end position="23"/>
    </location>
</feature>
<feature type="compositionally biased region" description="Pro residues" evidence="3">
    <location>
        <begin position="32"/>
        <end position="52"/>
    </location>
</feature>
<feature type="active site" evidence="1">
    <location>
        <position position="201"/>
    </location>
</feature>
<feature type="active site" evidence="1">
    <location>
        <position position="257"/>
    </location>
</feature>
<reference key="1">
    <citation type="journal article" date="2008" name="PLoS Genet.">
        <title>Genomic islands in the pathogenic filamentous fungus Aspergillus fumigatus.</title>
        <authorList>
            <person name="Fedorova N.D."/>
            <person name="Khaldi N."/>
            <person name="Joardar V.S."/>
            <person name="Maiti R."/>
            <person name="Amedeo P."/>
            <person name="Anderson M.J."/>
            <person name="Crabtree J."/>
            <person name="Silva J.C."/>
            <person name="Badger J.H."/>
            <person name="Albarraq A."/>
            <person name="Angiuoli S."/>
            <person name="Bussey H."/>
            <person name="Bowyer P."/>
            <person name="Cotty P.J."/>
            <person name="Dyer P.S."/>
            <person name="Egan A."/>
            <person name="Galens K."/>
            <person name="Fraser-Liggett C.M."/>
            <person name="Haas B.J."/>
            <person name="Inman J.M."/>
            <person name="Kent R."/>
            <person name="Lemieux S."/>
            <person name="Malavazi I."/>
            <person name="Orvis J."/>
            <person name="Roemer T."/>
            <person name="Ronning C.M."/>
            <person name="Sundaram J.P."/>
            <person name="Sutton G."/>
            <person name="Turner G."/>
            <person name="Venter J.C."/>
            <person name="White O.R."/>
            <person name="Whitty B.R."/>
            <person name="Youngman P."/>
            <person name="Wolfe K.H."/>
            <person name="Goldman G.H."/>
            <person name="Wortman J.R."/>
            <person name="Jiang B."/>
            <person name="Denning D.W."/>
            <person name="Nierman W.C."/>
        </authorList>
    </citation>
    <scope>NUCLEOTIDE SEQUENCE [LARGE SCALE GENOMIC DNA]</scope>
    <source>
        <strain>ATCC 1007 / CBS 513.65 / DSM 816 / NCTC 3887 / NRRL 1 / QM 1276 / 107</strain>
    </source>
</reference>
<sequence length="410" mass="45568">MYHRNSAPPPPGWSGGYPPPQSQWPPHSYQYPPYPPQGPPPPPAHSYSPPPTYGNYPSPYSTPPPHSPSPYQHPQHGHSRSWTNPSLPPRPPRESQSFGKGAPSNYRFQYSECTGRRRALLIGINYIGQPNQLRGCINDVTNMSTFLHERFGYRREDMVILTDDQKNPMSVPTKINILRAMQWLVKDAQPNDSLFIHFSGHGGRTPDLDGDEEDGYDDVIYPVDYRVAGHIVDDEMHNIMVRPLQPGVRLTAIFDSCHSGTALDLPYVYSTQGILKEPNLAKEAAQDLFSALASYGKGDLSGVAMTAIGFLKKAAIGDSARQRTVMTKTSPADVVMFSGSKDTQTSADTFQDGEARGALSWAFIKSQKQRPNQSYLQLLNSIRAELEGKYTQKPQLSCSHPLDVNLLFVM</sequence>
<comment type="function">
    <text evidence="1">Involved in cell death (apoptosis).</text>
</comment>
<comment type="similarity">
    <text evidence="4">Belongs to the peptidase C14B family.</text>
</comment>
<organism>
    <name type="scientific">Aspergillus clavatus (strain ATCC 1007 / CBS 513.65 / DSM 816 / NCTC 3887 / NRRL 1 / QM 1276 / 107)</name>
    <dbReference type="NCBI Taxonomy" id="344612"/>
    <lineage>
        <taxon>Eukaryota</taxon>
        <taxon>Fungi</taxon>
        <taxon>Dikarya</taxon>
        <taxon>Ascomycota</taxon>
        <taxon>Pezizomycotina</taxon>
        <taxon>Eurotiomycetes</taxon>
        <taxon>Eurotiomycetidae</taxon>
        <taxon>Eurotiales</taxon>
        <taxon>Aspergillaceae</taxon>
        <taxon>Aspergillus</taxon>
        <taxon>Aspergillus subgen. Fumigati</taxon>
    </lineage>
</organism>
<name>MCA1B_ASPCL</name>
<protein>
    <recommendedName>
        <fullName>Metacaspase-1B</fullName>
        <ecNumber>3.4.22.-</ecNumber>
    </recommendedName>
</protein>
<gene>
    <name type="primary">casB</name>
    <name type="ORF">ACLA_041220</name>
</gene>
<keyword id="KW-0053">Apoptosis</keyword>
<keyword id="KW-0378">Hydrolase</keyword>
<keyword id="KW-0645">Protease</keyword>
<keyword id="KW-1185">Reference proteome</keyword>
<keyword id="KW-0788">Thiol protease</keyword>
<keyword id="KW-0865">Zymogen</keyword>
<dbReference type="EC" id="3.4.22.-"/>
<dbReference type="EMBL" id="DS027056">
    <property type="protein sequence ID" value="EAW09906.1"/>
    <property type="molecule type" value="Genomic_DNA"/>
</dbReference>
<dbReference type="RefSeq" id="XP_001271332.1">
    <property type="nucleotide sequence ID" value="XM_001271331.1"/>
</dbReference>
<dbReference type="SMR" id="A1CL82"/>
<dbReference type="STRING" id="344612.A1CL82"/>
<dbReference type="EnsemblFungi" id="EAW09906">
    <property type="protein sequence ID" value="EAW09906"/>
    <property type="gene ID" value="ACLA_041220"/>
</dbReference>
<dbReference type="GeneID" id="4702762"/>
<dbReference type="KEGG" id="act:ACLA_041220"/>
<dbReference type="VEuPathDB" id="FungiDB:ACLA_041220"/>
<dbReference type="eggNOG" id="KOG1546">
    <property type="taxonomic scope" value="Eukaryota"/>
</dbReference>
<dbReference type="HOGENOM" id="CLU_029389_0_2_1"/>
<dbReference type="OMA" id="DEMHNIM"/>
<dbReference type="OrthoDB" id="3223806at2759"/>
<dbReference type="Proteomes" id="UP000006701">
    <property type="component" value="Unassembled WGS sequence"/>
</dbReference>
<dbReference type="GO" id="GO:0005737">
    <property type="term" value="C:cytoplasm"/>
    <property type="evidence" value="ECO:0007669"/>
    <property type="project" value="TreeGrafter"/>
</dbReference>
<dbReference type="GO" id="GO:0004197">
    <property type="term" value="F:cysteine-type endopeptidase activity"/>
    <property type="evidence" value="ECO:0007669"/>
    <property type="project" value="InterPro"/>
</dbReference>
<dbReference type="GO" id="GO:0006915">
    <property type="term" value="P:apoptotic process"/>
    <property type="evidence" value="ECO:0007669"/>
    <property type="project" value="UniProtKB-KW"/>
</dbReference>
<dbReference type="GO" id="GO:0006508">
    <property type="term" value="P:proteolysis"/>
    <property type="evidence" value="ECO:0007669"/>
    <property type="project" value="UniProtKB-KW"/>
</dbReference>
<dbReference type="Gene3D" id="3.40.50.12660">
    <property type="match status" value="1"/>
</dbReference>
<dbReference type="InterPro" id="IPR029030">
    <property type="entry name" value="Caspase-like_dom_sf"/>
</dbReference>
<dbReference type="InterPro" id="IPR050452">
    <property type="entry name" value="Metacaspase"/>
</dbReference>
<dbReference type="InterPro" id="IPR011600">
    <property type="entry name" value="Pept_C14_caspase"/>
</dbReference>
<dbReference type="PANTHER" id="PTHR48104:SF23">
    <property type="entry name" value="METACASPASE (EUROFUNG)"/>
    <property type="match status" value="1"/>
</dbReference>
<dbReference type="PANTHER" id="PTHR48104">
    <property type="entry name" value="METACASPASE-4"/>
    <property type="match status" value="1"/>
</dbReference>
<dbReference type="Pfam" id="PF00656">
    <property type="entry name" value="Peptidase_C14"/>
    <property type="match status" value="1"/>
</dbReference>
<dbReference type="SUPFAM" id="SSF52129">
    <property type="entry name" value="Caspase-like"/>
    <property type="match status" value="1"/>
</dbReference>
<accession>A1CL82</accession>
<evidence type="ECO:0000250" key="1"/>
<evidence type="ECO:0000255" key="2"/>
<evidence type="ECO:0000256" key="3">
    <source>
        <dbReference type="SAM" id="MobiDB-lite"/>
    </source>
</evidence>
<evidence type="ECO:0000305" key="4"/>
<proteinExistence type="inferred from homology"/>